<name>ILVD_STRP4</name>
<proteinExistence type="inferred from homology"/>
<reference key="1">
    <citation type="journal article" date="2001" name="Microb. Drug Resist.">
        <title>Annotated draft genomic sequence from a Streptococcus pneumoniae type 19F clinical isolate.</title>
        <authorList>
            <person name="Dopazo J."/>
            <person name="Mendoza A."/>
            <person name="Herrero J."/>
            <person name="Caldara F."/>
            <person name="Humbert Y."/>
            <person name="Friedli L."/>
            <person name="Guerrier M."/>
            <person name="Grand-Schenk E."/>
            <person name="Gandin C."/>
            <person name="de Francesco M."/>
            <person name="Polissi A."/>
            <person name="Buell G."/>
            <person name="Feger G."/>
            <person name="Garcia E."/>
            <person name="Peitsch M."/>
            <person name="Garcia-Bustos J.F."/>
        </authorList>
    </citation>
    <scope>NUCLEOTIDE SEQUENCE [LARGE SCALE GENOMIC DNA]</scope>
    <source>
        <strain>G54</strain>
    </source>
</reference>
<reference key="2">
    <citation type="submission" date="2008-03" db="EMBL/GenBank/DDBJ databases">
        <title>Pneumococcal beta glucoside metabolism investigated by whole genome comparison.</title>
        <authorList>
            <person name="Mulas L."/>
            <person name="Trappetti C."/>
            <person name="Hakenbeck R."/>
            <person name="Iannelli F."/>
            <person name="Pozzi G."/>
            <person name="Davidsen T.M."/>
            <person name="Tettelin H."/>
            <person name="Oggioni M."/>
        </authorList>
    </citation>
    <scope>NUCLEOTIDE SEQUENCE [LARGE SCALE GENOMIC DNA]</scope>
    <source>
        <strain>G54</strain>
    </source>
</reference>
<comment type="function">
    <text evidence="1">Functions in the biosynthesis of branched-chain amino acids. Catalyzes the dehydration of (2R,3R)-2,3-dihydroxy-3-methylpentanoate (2,3-dihydroxy-3-methylvalerate) into 2-oxo-3-methylpentanoate (2-oxo-3-methylvalerate) and of (2R)-2,3-dihydroxy-3-methylbutanoate (2,3-dihydroxyisovalerate) into 2-oxo-3-methylbutanoate (2-oxoisovalerate), the penultimate precursor to L-isoleucine and L-valine, respectively.</text>
</comment>
<comment type="catalytic activity">
    <reaction evidence="1">
        <text>(2R)-2,3-dihydroxy-3-methylbutanoate = 3-methyl-2-oxobutanoate + H2O</text>
        <dbReference type="Rhea" id="RHEA:24809"/>
        <dbReference type="ChEBI" id="CHEBI:11851"/>
        <dbReference type="ChEBI" id="CHEBI:15377"/>
        <dbReference type="ChEBI" id="CHEBI:49072"/>
        <dbReference type="EC" id="4.2.1.9"/>
    </reaction>
    <physiologicalReaction direction="left-to-right" evidence="1">
        <dbReference type="Rhea" id="RHEA:24810"/>
    </physiologicalReaction>
</comment>
<comment type="catalytic activity">
    <reaction evidence="1">
        <text>(2R,3R)-2,3-dihydroxy-3-methylpentanoate = (S)-3-methyl-2-oxopentanoate + H2O</text>
        <dbReference type="Rhea" id="RHEA:27694"/>
        <dbReference type="ChEBI" id="CHEBI:15377"/>
        <dbReference type="ChEBI" id="CHEBI:35146"/>
        <dbReference type="ChEBI" id="CHEBI:49258"/>
        <dbReference type="EC" id="4.2.1.9"/>
    </reaction>
    <physiologicalReaction direction="left-to-right" evidence="1">
        <dbReference type="Rhea" id="RHEA:27695"/>
    </physiologicalReaction>
</comment>
<comment type="cofactor">
    <cofactor evidence="1">
        <name>[2Fe-2S] cluster</name>
        <dbReference type="ChEBI" id="CHEBI:190135"/>
    </cofactor>
    <text evidence="1">Binds 1 [2Fe-2S] cluster per subunit. This cluster acts as a Lewis acid cofactor.</text>
</comment>
<comment type="cofactor">
    <cofactor evidence="1">
        <name>Mg(2+)</name>
        <dbReference type="ChEBI" id="CHEBI:18420"/>
    </cofactor>
</comment>
<comment type="pathway">
    <text evidence="1">Amino-acid biosynthesis; L-isoleucine biosynthesis; L-isoleucine from 2-oxobutanoate: step 3/4.</text>
</comment>
<comment type="pathway">
    <text evidence="1">Amino-acid biosynthesis; L-valine biosynthesis; L-valine from pyruvate: step 3/4.</text>
</comment>
<comment type="subunit">
    <text evidence="1">Homodimer.</text>
</comment>
<comment type="similarity">
    <text evidence="1">Belongs to the IlvD/Edd family.</text>
</comment>
<accession>B5E3D3</accession>
<protein>
    <recommendedName>
        <fullName evidence="1">Dihydroxy-acid dehydratase</fullName>
        <shortName evidence="1">DAD</shortName>
        <ecNumber evidence="1">4.2.1.9</ecNumber>
    </recommendedName>
</protein>
<feature type="chain" id="PRO_1000089419" description="Dihydroxy-acid dehydratase">
    <location>
        <begin position="1"/>
        <end position="567"/>
    </location>
</feature>
<feature type="active site" description="Proton acceptor" evidence="1">
    <location>
        <position position="474"/>
    </location>
</feature>
<feature type="binding site" evidence="1">
    <location>
        <position position="52"/>
    </location>
    <ligand>
        <name>[2Fe-2S] cluster</name>
        <dbReference type="ChEBI" id="CHEBI:190135"/>
    </ligand>
</feature>
<feature type="binding site" evidence="1">
    <location>
        <position position="84"/>
    </location>
    <ligand>
        <name>Mg(2+)</name>
        <dbReference type="ChEBI" id="CHEBI:18420"/>
    </ligand>
</feature>
<feature type="binding site" evidence="1">
    <location>
        <position position="125"/>
    </location>
    <ligand>
        <name>[2Fe-2S] cluster</name>
        <dbReference type="ChEBI" id="CHEBI:190135"/>
    </ligand>
</feature>
<feature type="binding site" evidence="1">
    <location>
        <position position="126"/>
    </location>
    <ligand>
        <name>Mg(2+)</name>
        <dbReference type="ChEBI" id="CHEBI:18420"/>
    </ligand>
</feature>
<feature type="binding site" description="via carbamate group" evidence="1">
    <location>
        <position position="127"/>
    </location>
    <ligand>
        <name>Mg(2+)</name>
        <dbReference type="ChEBI" id="CHEBI:18420"/>
    </ligand>
</feature>
<feature type="binding site" evidence="1">
    <location>
        <position position="197"/>
    </location>
    <ligand>
        <name>[2Fe-2S] cluster</name>
        <dbReference type="ChEBI" id="CHEBI:190135"/>
    </ligand>
</feature>
<feature type="binding site" evidence="1">
    <location>
        <position position="448"/>
    </location>
    <ligand>
        <name>Mg(2+)</name>
        <dbReference type="ChEBI" id="CHEBI:18420"/>
    </ligand>
</feature>
<feature type="modified residue" description="N6-carboxylysine" evidence="1">
    <location>
        <position position="127"/>
    </location>
</feature>
<keyword id="KW-0001">2Fe-2S</keyword>
<keyword id="KW-0028">Amino-acid biosynthesis</keyword>
<keyword id="KW-0100">Branched-chain amino acid biosynthesis</keyword>
<keyword id="KW-0408">Iron</keyword>
<keyword id="KW-0411">Iron-sulfur</keyword>
<keyword id="KW-0456">Lyase</keyword>
<keyword id="KW-0460">Magnesium</keyword>
<keyword id="KW-0479">Metal-binding</keyword>
<gene>
    <name evidence="1" type="primary">ilvD</name>
    <name type="ordered locus">SPG_2063</name>
</gene>
<dbReference type="EC" id="4.2.1.9" evidence="1"/>
<dbReference type="EMBL" id="CP001015">
    <property type="protein sequence ID" value="ACF56617.1"/>
    <property type="molecule type" value="Genomic_DNA"/>
</dbReference>
<dbReference type="SMR" id="B5E3D3"/>
<dbReference type="KEGG" id="spx:SPG_2063"/>
<dbReference type="HOGENOM" id="CLU_014271_4_2_9"/>
<dbReference type="UniPathway" id="UPA00047">
    <property type="reaction ID" value="UER00057"/>
</dbReference>
<dbReference type="UniPathway" id="UPA00049">
    <property type="reaction ID" value="UER00061"/>
</dbReference>
<dbReference type="GO" id="GO:0051537">
    <property type="term" value="F:2 iron, 2 sulfur cluster binding"/>
    <property type="evidence" value="ECO:0007669"/>
    <property type="project" value="UniProtKB-UniRule"/>
</dbReference>
<dbReference type="GO" id="GO:0004160">
    <property type="term" value="F:dihydroxy-acid dehydratase activity"/>
    <property type="evidence" value="ECO:0007669"/>
    <property type="project" value="UniProtKB-UniRule"/>
</dbReference>
<dbReference type="GO" id="GO:0000287">
    <property type="term" value="F:magnesium ion binding"/>
    <property type="evidence" value="ECO:0007669"/>
    <property type="project" value="UniProtKB-UniRule"/>
</dbReference>
<dbReference type="GO" id="GO:0009097">
    <property type="term" value="P:isoleucine biosynthetic process"/>
    <property type="evidence" value="ECO:0007669"/>
    <property type="project" value="UniProtKB-UniRule"/>
</dbReference>
<dbReference type="GO" id="GO:0009099">
    <property type="term" value="P:L-valine biosynthetic process"/>
    <property type="evidence" value="ECO:0007669"/>
    <property type="project" value="UniProtKB-UniRule"/>
</dbReference>
<dbReference type="FunFam" id="3.50.30.80:FF:000001">
    <property type="entry name" value="Dihydroxy-acid dehydratase"/>
    <property type="match status" value="1"/>
</dbReference>
<dbReference type="Gene3D" id="3.50.30.80">
    <property type="entry name" value="IlvD/EDD C-terminal domain-like"/>
    <property type="match status" value="1"/>
</dbReference>
<dbReference type="HAMAP" id="MF_00012">
    <property type="entry name" value="IlvD"/>
    <property type="match status" value="1"/>
</dbReference>
<dbReference type="InterPro" id="IPR050165">
    <property type="entry name" value="DHAD_IlvD/Edd"/>
</dbReference>
<dbReference type="InterPro" id="IPR042096">
    <property type="entry name" value="Dihydro-acid_dehy_C"/>
</dbReference>
<dbReference type="InterPro" id="IPR004404">
    <property type="entry name" value="DihydroxyA_deHydtase"/>
</dbReference>
<dbReference type="InterPro" id="IPR020558">
    <property type="entry name" value="DiOHA_6PGluconate_deHydtase_CS"/>
</dbReference>
<dbReference type="InterPro" id="IPR056740">
    <property type="entry name" value="ILV_EDD_C"/>
</dbReference>
<dbReference type="InterPro" id="IPR000581">
    <property type="entry name" value="ILV_EDD_N"/>
</dbReference>
<dbReference type="InterPro" id="IPR037237">
    <property type="entry name" value="IlvD/EDD_N"/>
</dbReference>
<dbReference type="NCBIfam" id="TIGR00110">
    <property type="entry name" value="ilvD"/>
    <property type="match status" value="1"/>
</dbReference>
<dbReference type="NCBIfam" id="NF002068">
    <property type="entry name" value="PRK00911.1"/>
    <property type="match status" value="1"/>
</dbReference>
<dbReference type="PANTHER" id="PTHR21000">
    <property type="entry name" value="DIHYDROXY-ACID DEHYDRATASE DAD"/>
    <property type="match status" value="1"/>
</dbReference>
<dbReference type="PANTHER" id="PTHR21000:SF5">
    <property type="entry name" value="DIHYDROXY-ACID DEHYDRATASE, MITOCHONDRIAL"/>
    <property type="match status" value="1"/>
</dbReference>
<dbReference type="Pfam" id="PF24877">
    <property type="entry name" value="ILV_EDD_C"/>
    <property type="match status" value="1"/>
</dbReference>
<dbReference type="Pfam" id="PF00920">
    <property type="entry name" value="ILVD_EDD_N"/>
    <property type="match status" value="1"/>
</dbReference>
<dbReference type="SUPFAM" id="SSF143975">
    <property type="entry name" value="IlvD/EDD N-terminal domain-like"/>
    <property type="match status" value="1"/>
</dbReference>
<dbReference type="SUPFAM" id="SSF52016">
    <property type="entry name" value="LeuD/IlvD-like"/>
    <property type="match status" value="1"/>
</dbReference>
<dbReference type="PROSITE" id="PS00886">
    <property type="entry name" value="ILVD_EDD_1"/>
    <property type="match status" value="1"/>
</dbReference>
<dbReference type="PROSITE" id="PS00887">
    <property type="entry name" value="ILVD_EDD_2"/>
    <property type="match status" value="1"/>
</dbReference>
<organism>
    <name type="scientific">Streptococcus pneumoniae serotype 19F (strain G54)</name>
    <dbReference type="NCBI Taxonomy" id="512566"/>
    <lineage>
        <taxon>Bacteria</taxon>
        <taxon>Bacillati</taxon>
        <taxon>Bacillota</taxon>
        <taxon>Bacilli</taxon>
        <taxon>Lactobacillales</taxon>
        <taxon>Streptococcaceae</taxon>
        <taxon>Streptococcus</taxon>
    </lineage>
</organism>
<sequence length="567" mass="59859">MTELDKRHRSSIYDSMVKSPNRAMLRATGMTDKDFETSIVGVISTWAENTPCNIHLHDFGKLAKEGVKSAGAWPVQFGTITVADGIAMGTPGMRFSLTSRDIIADSIEAAMSGHNVDAFVAIGGCDKNMPGSMIAIANMDIPAIFAYGGTIAPGNLDGKDIDLVSVFEGIGKWNHGDMTAEDVKRLECNACPGPGGCGGMYTANTMATAIEVLGMSLPGSSSHPAESADKKEDIEAAGRAVVKMLELGLKPSDILTREAFEDAITVTMALGGSTNATLHLLAIAHAANVDLSLEDFNTIQERVPHLADLKPSGQYVFQDLYEVGGVPAVMKYLLANGFLHGDRITCTGKTVAENLADFADLTPGQKVIMPLENPKRADGPLIILNGNLAPDGAVAKVSGVKVRRHVGPAKVFDSEEDAIQAVLTDEIVDGDVVVVRFVGPKGGPGMPEMLSLSSMIVGKGQGDKVALLTDGRFSGGTYGLVVGHIAPEAQDGGPIAYLRTGDIVTVDQDTKEISMAVSEEELEKRKAETTLPPLYSRGVLGKYAHIVSSASRGAVTDFWNMDKSGKK</sequence>
<evidence type="ECO:0000255" key="1">
    <source>
        <dbReference type="HAMAP-Rule" id="MF_00012"/>
    </source>
</evidence>